<accession>O68215</accession>
<sequence length="545" mass="64098">MFILNNRKWRKLKRDPSAFFRDSKFNFLRYFSAKKFAKNFKNSSHIHKTNISKAQSNISSTLKENRKQDMLIPINFFNFEYIVKKLNNQNAIGVYILPSNLTLKPALCILESHKEDFLNKFLLTISSENLKLQYKFNGQIKNPKSVNEIWTDLFSIAHVDMKLSTDRTLSSSISQFWFRLEFCKEDKDFILFSTANRYSRKLWKHSIKNNQLFKEGIRNYSEISSLPYEEDHNFDIDLVFTWVNSEDKNWQELYKKYKPDFNSDATSTSRFLSRDELKFALRSWEMSGSFIRKIFIVSNCAPPAWLDLNNPKIQWVYHEEIMPQSALPTFSSHAIETSLHHIPGISNYFIYSNDDFLLTKPLNKDNFFYSNGIAKLRLEAWGNVNGECTEGEPDYLNGARNANTLLEKEFKKFTTKLHTHSPQSMRTDILFEMEKKYPEEFNRTLHNKFRSLDDIAVTGYLYHHYALLSGRALQSSDKTELVQQNHDFKKKLNNVVTLTKERNFDKLPLSVCINDGADSHLNEEWNVQVIKFLETLFPLPSSFEK</sequence>
<keyword id="KW-0270">Exopolysaccharide synthesis</keyword>
<keyword id="KW-0808">Transferase</keyword>
<protein>
    <recommendedName>
        <fullName>Capsular polysaccharide phosphotransferase SacB</fullName>
        <ecNumber>2.7.-.-</ecNumber>
    </recommendedName>
    <alternativeName>
        <fullName>Stealth protein SacB</fullName>
    </alternativeName>
</protein>
<reference key="1">
    <citation type="journal article" date="1998" name="J. Bacteriol.">
        <title>Characterization of the gene cassette required for biosynthesis of the (alpha1-&gt;6)-linked N-acetyl-D-mannosamine-1-phosphate capsule of serogroup A Neisseria meningitidis.</title>
        <authorList>
            <person name="Swartley J.S."/>
            <person name="Liu L.-J."/>
            <person name="Miller Y.K."/>
            <person name="Martin L.E."/>
            <person name="Edupuganti S."/>
            <person name="Stephens D.S."/>
        </authorList>
    </citation>
    <scope>NUCLEOTIDE SEQUENCE [GENOMIC DNA]</scope>
    <scope>CHARACTERIZATION</scope>
    <scope>DISCUSSION OF FUNCTION</scope>
    <source>
        <strain>F8229 / Serogroup A</strain>
    </source>
</reference>
<reference key="2">
    <citation type="journal article" date="2005" name="PLoS Comput. Biol.">
        <title>Stealth proteins: in silico identification of a novel protein family rendering bacterial pathogens invisible to host immune defense.</title>
        <authorList>
            <person name="Sperisen P."/>
            <person name="Schmid C.D."/>
            <person name="Bucher P."/>
            <person name="Zilian O."/>
        </authorList>
    </citation>
    <scope>IDENTIFICATION AS A STEALTH PROTEIN</scope>
    <scope>PREDICTION OF FUNCTION</scope>
</reference>
<organism>
    <name type="scientific">Neisseria meningitidis serogroup A</name>
    <dbReference type="NCBI Taxonomy" id="65699"/>
    <lineage>
        <taxon>Bacteria</taxon>
        <taxon>Pseudomonadati</taxon>
        <taxon>Pseudomonadota</taxon>
        <taxon>Betaproteobacteria</taxon>
        <taxon>Neisseriales</taxon>
        <taxon>Neisseriaceae</taxon>
        <taxon>Neisseria</taxon>
    </lineage>
</organism>
<proteinExistence type="evidence at protein level"/>
<name>SACB2_NEIMD</name>
<dbReference type="EC" id="2.7.-.-"/>
<dbReference type="EMBL" id="AF019760">
    <property type="protein sequence ID" value="AAC38286.1"/>
    <property type="molecule type" value="Genomic_DNA"/>
</dbReference>
<dbReference type="SMR" id="O68215"/>
<dbReference type="GO" id="GO:0016772">
    <property type="term" value="F:transferase activity, transferring phosphorus-containing groups"/>
    <property type="evidence" value="ECO:0007669"/>
    <property type="project" value="InterPro"/>
</dbReference>
<dbReference type="GO" id="GO:0000271">
    <property type="term" value="P:polysaccharide biosynthetic process"/>
    <property type="evidence" value="ECO:0007669"/>
    <property type="project" value="UniProtKB-KW"/>
</dbReference>
<dbReference type="InterPro" id="IPR047141">
    <property type="entry name" value="Stealth"/>
</dbReference>
<dbReference type="InterPro" id="IPR031358">
    <property type="entry name" value="Stealth_CR1"/>
</dbReference>
<dbReference type="InterPro" id="IPR021520">
    <property type="entry name" value="Stealth_CR2"/>
</dbReference>
<dbReference type="InterPro" id="IPR031357">
    <property type="entry name" value="Stealth_CR3"/>
</dbReference>
<dbReference type="InterPro" id="IPR031356">
    <property type="entry name" value="Stealth_CR4"/>
</dbReference>
<dbReference type="PANTHER" id="PTHR24045">
    <property type="match status" value="1"/>
</dbReference>
<dbReference type="PANTHER" id="PTHR24045:SF0">
    <property type="entry name" value="N-ACETYLGLUCOSAMINE-1-PHOSPHOTRANSFERASE SUBUNITS ALPHA_BETA"/>
    <property type="match status" value="1"/>
</dbReference>
<dbReference type="Pfam" id="PF17101">
    <property type="entry name" value="Stealth_CR1"/>
    <property type="match status" value="1"/>
</dbReference>
<dbReference type="Pfam" id="PF11380">
    <property type="entry name" value="Stealth_CR2"/>
    <property type="match status" value="1"/>
</dbReference>
<dbReference type="Pfam" id="PF17102">
    <property type="entry name" value="Stealth_CR3"/>
    <property type="match status" value="1"/>
</dbReference>
<dbReference type="Pfam" id="PF17103">
    <property type="entry name" value="Stealth_CR4"/>
    <property type="match status" value="1"/>
</dbReference>
<feature type="chain" id="PRO_0000235951" description="Capsular polysaccharide phosphotransferase SacB">
    <location>
        <begin position="1"/>
        <end position="545"/>
    </location>
</feature>
<comment type="function">
    <text>Part of a capsular biosynthesis operon and has been suggested to be the polymerase that links individual UDP-N-acetyl-D-mannosamine monomers. In serotype A the capsule is composed of repeated units of (alpha 1-6)-linked N-acetyl-D-mannosamine-1-phosphate. Non-polar disruption of this open reading frame prevented capsule synthesis.</text>
</comment>
<comment type="miscellaneous">
    <text>Stealth proteins are part of a protein family that is conserved from bacteria to higher eukaryotes. Family members were first identified in microbes as proteins that help pathogens to elude the host innate immune system. Microbial stealth proteins are involved in the biosynthesis of exopolysaccharides. Stealth proteins are predicted to function as hexose-1-phosphoryltransferases.</text>
</comment>
<comment type="similarity">
    <text evidence="1">Belongs to the stealth family.</text>
</comment>
<gene>
    <name type="primary">sacB</name>
</gene>
<evidence type="ECO:0000305" key="1"/>